<protein>
    <recommendedName>
        <fullName evidence="1">Putative transcriptional regulatory protein PYRAB13000</fullName>
    </recommendedName>
</protein>
<sequence length="145" mass="16496">MKTFLTEQQIKVLVLRAKGLKQSEIARILKTTRANVSILEKRALEKIEKARNTLLLWEQINSKVSVSVKAGEDIFTIPDRLFKEADKAGVKVPYSTAEIIAFLVEHAPIEDRLAKRDFVIFLDSKNRLRISECLINFVEEGIGND</sequence>
<organism>
    <name type="scientific">Pyrococcus abyssi (strain GE5 / Orsay)</name>
    <dbReference type="NCBI Taxonomy" id="272844"/>
    <lineage>
        <taxon>Archaea</taxon>
        <taxon>Methanobacteriati</taxon>
        <taxon>Methanobacteriota</taxon>
        <taxon>Thermococci</taxon>
        <taxon>Thermococcales</taxon>
        <taxon>Thermococcaceae</taxon>
        <taxon>Pyrococcus</taxon>
    </lineage>
</organism>
<proteinExistence type="inferred from homology"/>
<dbReference type="EMBL" id="AJ248287">
    <property type="protein sequence ID" value="CAB50205.1"/>
    <property type="molecule type" value="Genomic_DNA"/>
</dbReference>
<dbReference type="EMBL" id="HE613800">
    <property type="protein sequence ID" value="CCE70740.1"/>
    <property type="molecule type" value="Genomic_DNA"/>
</dbReference>
<dbReference type="PIR" id="H75038">
    <property type="entry name" value="H75038"/>
</dbReference>
<dbReference type="RefSeq" id="WP_010868414.1">
    <property type="nucleotide sequence ID" value="NC_000868.1"/>
</dbReference>
<dbReference type="SMR" id="Q9UZ54"/>
<dbReference type="STRING" id="272844.PAB1517"/>
<dbReference type="KEGG" id="pab:PAB1517"/>
<dbReference type="PATRIC" id="fig|272844.11.peg.1383"/>
<dbReference type="eggNOG" id="arCOG04554">
    <property type="taxonomic scope" value="Archaea"/>
</dbReference>
<dbReference type="HOGENOM" id="CLU_125807_0_1_2"/>
<dbReference type="OrthoDB" id="17771at2157"/>
<dbReference type="PhylomeDB" id="Q9UZ54"/>
<dbReference type="Proteomes" id="UP000000810">
    <property type="component" value="Chromosome"/>
</dbReference>
<dbReference type="Proteomes" id="UP000009139">
    <property type="component" value="Chromosome"/>
</dbReference>
<dbReference type="GO" id="GO:0003677">
    <property type="term" value="F:DNA binding"/>
    <property type="evidence" value="ECO:0007669"/>
    <property type="project" value="UniProtKB-KW"/>
</dbReference>
<dbReference type="GO" id="GO:0003700">
    <property type="term" value="F:DNA-binding transcription factor activity"/>
    <property type="evidence" value="ECO:0007669"/>
    <property type="project" value="UniProtKB-UniRule"/>
</dbReference>
<dbReference type="GO" id="GO:0006352">
    <property type="term" value="P:DNA-templated transcription initiation"/>
    <property type="evidence" value="ECO:0007669"/>
    <property type="project" value="InterPro"/>
</dbReference>
<dbReference type="Gene3D" id="3.30.1190.10">
    <property type="entry name" value="DNA-binding protein Tfx superfamily, archaea"/>
    <property type="match status" value="1"/>
</dbReference>
<dbReference type="HAMAP" id="MF_00620">
    <property type="entry name" value="HTH_type_Tfx"/>
    <property type="match status" value="1"/>
</dbReference>
<dbReference type="InterPro" id="IPR007630">
    <property type="entry name" value="RNA_pol_sigma70_r4"/>
</dbReference>
<dbReference type="InterPro" id="IPR029291">
    <property type="entry name" value="Tfx_C"/>
</dbReference>
<dbReference type="InterPro" id="IPR004645">
    <property type="entry name" value="Tfx_DNA-bd_arc"/>
</dbReference>
<dbReference type="InterPro" id="IPR018384">
    <property type="entry name" value="Tfx_DNA-bd_euryarc"/>
</dbReference>
<dbReference type="InterPro" id="IPR036657">
    <property type="entry name" value="Tfx_DNA-bd_sf_arc"/>
</dbReference>
<dbReference type="NCBIfam" id="NF003055">
    <property type="entry name" value="PRK03975.1-2"/>
    <property type="match status" value="1"/>
</dbReference>
<dbReference type="NCBIfam" id="NF003056">
    <property type="entry name" value="PRK03975.1-4"/>
    <property type="match status" value="1"/>
</dbReference>
<dbReference type="NCBIfam" id="TIGR00721">
    <property type="entry name" value="tfx"/>
    <property type="match status" value="1"/>
</dbReference>
<dbReference type="Pfam" id="PF04545">
    <property type="entry name" value="Sigma70_r4"/>
    <property type="match status" value="1"/>
</dbReference>
<dbReference type="Pfam" id="PF14601">
    <property type="entry name" value="TFX_C"/>
    <property type="match status" value="1"/>
</dbReference>
<dbReference type="PIRSF" id="PIRSF004932">
    <property type="entry name" value="DNA_bind_Tfx"/>
    <property type="match status" value="1"/>
</dbReference>
<dbReference type="SUPFAM" id="SSF89915">
    <property type="entry name" value="DNA-binding protein Tfx"/>
    <property type="match status" value="1"/>
</dbReference>
<keyword id="KW-0238">DNA-binding</keyword>
<keyword id="KW-0804">Transcription</keyword>
<keyword id="KW-0805">Transcription regulation</keyword>
<evidence type="ECO:0000255" key="1">
    <source>
        <dbReference type="HAMAP-Rule" id="MF_00620"/>
    </source>
</evidence>
<name>Y1300_PYRAB</name>
<feature type="chain" id="PRO_0000144172" description="Putative transcriptional regulatory protein PYRAB13000">
    <location>
        <begin position="1"/>
        <end position="145"/>
    </location>
</feature>
<comment type="function">
    <text evidence="1">Putative transcriptional regulator.</text>
</comment>
<comment type="similarity">
    <text evidence="1">Belongs to the Tfx family.</text>
</comment>
<gene>
    <name type="ordered locus">PYRAB13000</name>
    <name type="ORF">PAB1517</name>
</gene>
<reference key="1">
    <citation type="journal article" date="2003" name="Mol. Microbiol.">
        <title>An integrated analysis of the genome of the hyperthermophilic archaeon Pyrococcus abyssi.</title>
        <authorList>
            <person name="Cohen G.N."/>
            <person name="Barbe V."/>
            <person name="Flament D."/>
            <person name="Galperin M."/>
            <person name="Heilig R."/>
            <person name="Lecompte O."/>
            <person name="Poch O."/>
            <person name="Prieur D."/>
            <person name="Querellou J."/>
            <person name="Ripp R."/>
            <person name="Thierry J.-C."/>
            <person name="Van der Oost J."/>
            <person name="Weissenbach J."/>
            <person name="Zivanovic Y."/>
            <person name="Forterre P."/>
        </authorList>
    </citation>
    <scope>NUCLEOTIDE SEQUENCE [LARGE SCALE GENOMIC DNA]</scope>
    <source>
        <strain>GE5 / Orsay</strain>
    </source>
</reference>
<reference key="2">
    <citation type="journal article" date="2012" name="Curr. Microbiol.">
        <title>Re-annotation of two hyperthermophilic archaea Pyrococcus abyssi GE5 and Pyrococcus furiosus DSM 3638.</title>
        <authorList>
            <person name="Gao J."/>
            <person name="Wang J."/>
        </authorList>
    </citation>
    <scope>GENOME REANNOTATION</scope>
    <source>
        <strain>GE5 / Orsay</strain>
    </source>
</reference>
<accession>Q9UZ54</accession>
<accession>G8ZHA3</accession>